<comment type="function">
    <text evidence="1">Endonuclease that is involved in the suppression of homologous recombination and thus may have a key role in the control of bacterial genetic diversity.</text>
</comment>
<comment type="function">
    <text evidence="1">Acts as a ribosome collision sensor, splitting the ribosome into its 2 subunits. Detects stalled/collided 70S ribosomes which it binds and splits by an ATP-hydrolysis driven conformational change. Acts upstream of the ribosome quality control system (RQC), a ribosome-associated complex that mediates the extraction of incompletely synthesized nascent chains from stalled ribosomes and their subsequent degradation. Probably generates substrates for RQC.</text>
</comment>
<comment type="subunit">
    <text evidence="1">Homodimer. Binds to stalled ribosomes, contacting rRNA.</text>
</comment>
<comment type="similarity">
    <text evidence="1">Belongs to the DNA mismatch repair MutS family. MutS2 subfamily.</text>
</comment>
<name>MUTS2_BREBN</name>
<sequence>MEQRVLKTLEYDKIVALLIDKASCTYGKEKASELIPFLRLDEVINAQQGTEQAATVLRLKGSVPLGGIRDIRGPVQRARLNAMLAPMELLDIASTVMAGRRLKTFLLDMCDDHELPLLQQQAERIEGLRELETEIRRCVDENGDILDSASLELRQVRQEIRQLESRIREKLDQMTRSSTYQKMLMENIVTIRGDRFVIPVKQEYRSVFGGIVHDQSASGATLFIEPEVIVEMNNKLRELRLREEREVERILYVLTEQVSFAVEALVENTEALTELDFMFAKAQLAWSMKAICPRINDRGYVNMRKARHPLIPREVVVPVDVELGGEYQAIVVTGPNTGGKTVSLKTIGLLSLMTMAGLHIPAEEESEMTVFSSIFADIGDEQSIEQSLSTFSSHMTNIIQILAKMDDKSLVLFDELGAGTDPTEGAALAMSIIDHVIDSGARLVATTHYSELKAYAYDRPEVINASVEFDVQTLRPTYRLLIGVPGRSNAFAIARRLGLPEHIIDVARGSISEEDNQVESMIASLERNRKSAEADRLAAKAARQEAEELRTQLEEERAQFAEEKNKRMERAEDEARIAVQLAKEEAETIIRELREMMAEGMEIKEHRLIDAKKRLGNAVLELEKEKVKKPAKAVRATQIKVGDEVMVTSFGQKGTVLEKVNNEEFLVQIGIMKMKVKRDDMHVQNSIQQKPQAAPYTSVKRRSDNIKMDLDLRGYNVEDSIREIDQFLDDALLAGLHSVSIIHGHGTGVLRKGVHEYLRSHRNVKSFRLGGQGEGGVGATIAELK</sequence>
<gene>
    <name evidence="1" type="primary">mutS2</name>
    <name evidence="1" type="synonym">rqcU</name>
    <name type="ordered locus">BBR47_16440</name>
</gene>
<proteinExistence type="inferred from homology"/>
<keyword id="KW-0067">ATP-binding</keyword>
<keyword id="KW-0238">DNA-binding</keyword>
<keyword id="KW-0255">Endonuclease</keyword>
<keyword id="KW-0378">Hydrolase</keyword>
<keyword id="KW-0540">Nuclease</keyword>
<keyword id="KW-0547">Nucleotide-binding</keyword>
<keyword id="KW-1185">Reference proteome</keyword>
<keyword id="KW-0694">RNA-binding</keyword>
<keyword id="KW-0699">rRNA-binding</keyword>
<organism>
    <name type="scientific">Brevibacillus brevis (strain 47 / JCM 6285 / NBRC 100599)</name>
    <dbReference type="NCBI Taxonomy" id="358681"/>
    <lineage>
        <taxon>Bacteria</taxon>
        <taxon>Bacillati</taxon>
        <taxon>Bacillota</taxon>
        <taxon>Bacilli</taxon>
        <taxon>Bacillales</taxon>
        <taxon>Paenibacillaceae</taxon>
        <taxon>Brevibacillus</taxon>
    </lineage>
</organism>
<dbReference type="EC" id="3.1.-.-" evidence="1"/>
<dbReference type="EC" id="3.6.4.-" evidence="1"/>
<dbReference type="EMBL" id="AP008955">
    <property type="protein sequence ID" value="BAH42621.1"/>
    <property type="molecule type" value="Genomic_DNA"/>
</dbReference>
<dbReference type="RefSeq" id="WP_012685367.1">
    <property type="nucleotide sequence ID" value="NC_012491.1"/>
</dbReference>
<dbReference type="SMR" id="C0Z9F1"/>
<dbReference type="STRING" id="358681.BBR47_16440"/>
<dbReference type="KEGG" id="bbe:BBR47_16440"/>
<dbReference type="eggNOG" id="COG1193">
    <property type="taxonomic scope" value="Bacteria"/>
</dbReference>
<dbReference type="HOGENOM" id="CLU_011252_2_1_9"/>
<dbReference type="Proteomes" id="UP000001877">
    <property type="component" value="Chromosome"/>
</dbReference>
<dbReference type="GO" id="GO:0005524">
    <property type="term" value="F:ATP binding"/>
    <property type="evidence" value="ECO:0007669"/>
    <property type="project" value="UniProtKB-UniRule"/>
</dbReference>
<dbReference type="GO" id="GO:0016887">
    <property type="term" value="F:ATP hydrolysis activity"/>
    <property type="evidence" value="ECO:0007669"/>
    <property type="project" value="InterPro"/>
</dbReference>
<dbReference type="GO" id="GO:0140664">
    <property type="term" value="F:ATP-dependent DNA damage sensor activity"/>
    <property type="evidence" value="ECO:0007669"/>
    <property type="project" value="InterPro"/>
</dbReference>
<dbReference type="GO" id="GO:0004519">
    <property type="term" value="F:endonuclease activity"/>
    <property type="evidence" value="ECO:0007669"/>
    <property type="project" value="UniProtKB-UniRule"/>
</dbReference>
<dbReference type="GO" id="GO:0030983">
    <property type="term" value="F:mismatched DNA binding"/>
    <property type="evidence" value="ECO:0007669"/>
    <property type="project" value="InterPro"/>
</dbReference>
<dbReference type="GO" id="GO:0043023">
    <property type="term" value="F:ribosomal large subunit binding"/>
    <property type="evidence" value="ECO:0007669"/>
    <property type="project" value="UniProtKB-UniRule"/>
</dbReference>
<dbReference type="GO" id="GO:0019843">
    <property type="term" value="F:rRNA binding"/>
    <property type="evidence" value="ECO:0007669"/>
    <property type="project" value="UniProtKB-UniRule"/>
</dbReference>
<dbReference type="GO" id="GO:0006298">
    <property type="term" value="P:mismatch repair"/>
    <property type="evidence" value="ECO:0007669"/>
    <property type="project" value="InterPro"/>
</dbReference>
<dbReference type="GO" id="GO:0045910">
    <property type="term" value="P:negative regulation of DNA recombination"/>
    <property type="evidence" value="ECO:0007669"/>
    <property type="project" value="InterPro"/>
</dbReference>
<dbReference type="GO" id="GO:0072344">
    <property type="term" value="P:rescue of stalled ribosome"/>
    <property type="evidence" value="ECO:0007669"/>
    <property type="project" value="UniProtKB-UniRule"/>
</dbReference>
<dbReference type="CDD" id="cd03280">
    <property type="entry name" value="ABC_MutS2"/>
    <property type="match status" value="1"/>
</dbReference>
<dbReference type="FunFam" id="3.40.50.300:FF:000830">
    <property type="entry name" value="Endonuclease MutS2"/>
    <property type="match status" value="1"/>
</dbReference>
<dbReference type="Gene3D" id="3.30.1370.110">
    <property type="match status" value="1"/>
</dbReference>
<dbReference type="Gene3D" id="3.40.50.300">
    <property type="entry name" value="P-loop containing nucleotide triphosphate hydrolases"/>
    <property type="match status" value="1"/>
</dbReference>
<dbReference type="HAMAP" id="MF_00092">
    <property type="entry name" value="MutS2"/>
    <property type="match status" value="1"/>
</dbReference>
<dbReference type="InterPro" id="IPR000432">
    <property type="entry name" value="DNA_mismatch_repair_MutS_C"/>
</dbReference>
<dbReference type="InterPro" id="IPR007696">
    <property type="entry name" value="DNA_mismatch_repair_MutS_core"/>
</dbReference>
<dbReference type="InterPro" id="IPR036187">
    <property type="entry name" value="DNA_mismatch_repair_MutS_sf"/>
</dbReference>
<dbReference type="InterPro" id="IPR046893">
    <property type="entry name" value="MSSS"/>
</dbReference>
<dbReference type="InterPro" id="IPR045076">
    <property type="entry name" value="MutS"/>
</dbReference>
<dbReference type="InterPro" id="IPR005747">
    <property type="entry name" value="MutS2"/>
</dbReference>
<dbReference type="InterPro" id="IPR027417">
    <property type="entry name" value="P-loop_NTPase"/>
</dbReference>
<dbReference type="InterPro" id="IPR002625">
    <property type="entry name" value="Smr_dom"/>
</dbReference>
<dbReference type="InterPro" id="IPR036063">
    <property type="entry name" value="Smr_dom_sf"/>
</dbReference>
<dbReference type="NCBIfam" id="TIGR01069">
    <property type="entry name" value="mutS2"/>
    <property type="match status" value="1"/>
</dbReference>
<dbReference type="PANTHER" id="PTHR48466:SF2">
    <property type="entry name" value="OS10G0509000 PROTEIN"/>
    <property type="match status" value="1"/>
</dbReference>
<dbReference type="PANTHER" id="PTHR48466">
    <property type="entry name" value="OS10G0509000 PROTEIN-RELATED"/>
    <property type="match status" value="1"/>
</dbReference>
<dbReference type="Pfam" id="PF20297">
    <property type="entry name" value="MSSS"/>
    <property type="match status" value="1"/>
</dbReference>
<dbReference type="Pfam" id="PF00488">
    <property type="entry name" value="MutS_V"/>
    <property type="match status" value="1"/>
</dbReference>
<dbReference type="Pfam" id="PF01713">
    <property type="entry name" value="Smr"/>
    <property type="match status" value="1"/>
</dbReference>
<dbReference type="PIRSF" id="PIRSF005814">
    <property type="entry name" value="MutS_YshD"/>
    <property type="match status" value="1"/>
</dbReference>
<dbReference type="SMART" id="SM00534">
    <property type="entry name" value="MUTSac"/>
    <property type="match status" value="1"/>
</dbReference>
<dbReference type="SMART" id="SM00533">
    <property type="entry name" value="MUTSd"/>
    <property type="match status" value="1"/>
</dbReference>
<dbReference type="SMART" id="SM00463">
    <property type="entry name" value="SMR"/>
    <property type="match status" value="1"/>
</dbReference>
<dbReference type="SUPFAM" id="SSF48334">
    <property type="entry name" value="DNA repair protein MutS, domain III"/>
    <property type="match status" value="1"/>
</dbReference>
<dbReference type="SUPFAM" id="SSF52540">
    <property type="entry name" value="P-loop containing nucleoside triphosphate hydrolases"/>
    <property type="match status" value="1"/>
</dbReference>
<dbReference type="SUPFAM" id="SSF160443">
    <property type="entry name" value="SMR domain-like"/>
    <property type="match status" value="1"/>
</dbReference>
<dbReference type="PROSITE" id="PS00486">
    <property type="entry name" value="DNA_MISMATCH_REPAIR_2"/>
    <property type="match status" value="1"/>
</dbReference>
<dbReference type="PROSITE" id="PS50828">
    <property type="entry name" value="SMR"/>
    <property type="match status" value="1"/>
</dbReference>
<feature type="chain" id="PRO_1000192214" description="Endonuclease MutS2">
    <location>
        <begin position="1"/>
        <end position="785"/>
    </location>
</feature>
<feature type="domain" description="Smr" evidence="1">
    <location>
        <begin position="710"/>
        <end position="785"/>
    </location>
</feature>
<feature type="binding site" evidence="1">
    <location>
        <begin position="334"/>
        <end position="341"/>
    </location>
    <ligand>
        <name>ATP</name>
        <dbReference type="ChEBI" id="CHEBI:30616"/>
    </ligand>
</feature>
<evidence type="ECO:0000255" key="1">
    <source>
        <dbReference type="HAMAP-Rule" id="MF_00092"/>
    </source>
</evidence>
<reference key="1">
    <citation type="submission" date="2005-03" db="EMBL/GenBank/DDBJ databases">
        <title>Brevibacillus brevis strain 47, complete genome.</title>
        <authorList>
            <person name="Hosoyama A."/>
            <person name="Yamada R."/>
            <person name="Hongo Y."/>
            <person name="Terui Y."/>
            <person name="Ankai A."/>
            <person name="Masuyama W."/>
            <person name="Sekiguchi M."/>
            <person name="Takeda T."/>
            <person name="Asano K."/>
            <person name="Ohji S."/>
            <person name="Ichikawa N."/>
            <person name="Narita S."/>
            <person name="Aoki N."/>
            <person name="Miura H."/>
            <person name="Matsushita S."/>
            <person name="Sekigawa T."/>
            <person name="Yamagata H."/>
            <person name="Yoshikawa H."/>
            <person name="Udaka S."/>
            <person name="Tanikawa S."/>
            <person name="Fujita N."/>
        </authorList>
    </citation>
    <scope>NUCLEOTIDE SEQUENCE [LARGE SCALE GENOMIC DNA]</scope>
    <source>
        <strain>47 / JCM 6285 / NBRC 100599</strain>
    </source>
</reference>
<accession>C0Z9F1</accession>
<protein>
    <recommendedName>
        <fullName evidence="1">Endonuclease MutS2</fullName>
        <ecNumber evidence="1">3.1.-.-</ecNumber>
    </recommendedName>
    <alternativeName>
        <fullName evidence="1">Ribosome-associated protein quality control-upstream factor</fullName>
        <shortName evidence="1">RQC-upstream factor</shortName>
        <shortName evidence="1">RqcU</shortName>
        <ecNumber evidence="1">3.6.4.-</ecNumber>
    </alternativeName>
</protein>